<sequence>MGHTHSRQLFVHMLSVMLKHRGITVSKTKLINFLSFIEEVCPWFPREGTVNLETWKKVGEQIRTHYTLHGPEKVPVETLSFWTLIRDCLDFDNDELKRLGNLLKQEEDPLHTPDSVPSYDPPPPPPPSLKMHPSDNDDSLSSTDEAELDEEAAKYHQEDWGFLAQEKGALTSKDELVECFKNLTIALQNAGIQLPSNNNTFPSAPPFPPAYTPTVMAGLDPPPGFPPPSKHMSPLQKALRQAQRLGEVVSDFSLAFPVFENNNQRYYESLPFKQLKELKIACSQYGPTAPFTIAMIESLGTQALPPNDWKQTARACLSGGDYLLWKSEFFEQCARIADVNRQQGIQTSYEMLIGEGPYQATDTQLNFLPGAYAQISNAARQAWKKLPSSSTKTEDLSKVRQGPDEPYQDFVARLLDTIGKIMSDEKAGMVLAKQLAFENANSACQAALRPYRKKGDLSDFIRICADIGPSYMQGIAMAAALQGKSIKEVLFQQQARNKKGLQKSGNSGCFVCGQPGHRAAVCPQKHQTSVNTPNLCPRCKKGKHWARDCRSKTDVQGNPLPPVSGNLGEGPAPGPETMLWGNTAGSKRTIADLCRATRGSAGLDLCATSYTVLTPEMGVQTLATGVFGPLPPGTVGLLLGRSSASLKGILIHPGVIDSDYTGEIKILASAPNKIIVINAGQRIAQLLLVPLVIQGKTINRDRQDKGFGSSDAYWVQNVTEARPELELRINANFFRGVLDTGADISVISDKYWPTTWPKQMAISTLQGIGQTTNPEQSSSLLTWKDKDGHTGQFKPYILPYLPVNLWGRDILSKMGVYLYSPSPTVTDLMLDQGLLPNQGLGKQHQGIILPLDLKPNQDRKGLGCFP</sequence>
<keyword id="KW-0064">Aspartyl protease</keyword>
<keyword id="KW-0167">Capsid protein</keyword>
<keyword id="KW-0238">DNA-binding</keyword>
<keyword id="KW-0378">Hydrolase</keyword>
<keyword id="KW-0449">Lipoprotein</keyword>
<keyword id="KW-0460">Magnesium</keyword>
<keyword id="KW-0479">Metal-binding</keyword>
<keyword id="KW-0511">Multifunctional enzyme</keyword>
<keyword id="KW-0519">Myristate</keyword>
<keyword id="KW-0546">Nucleotide metabolism</keyword>
<keyword id="KW-0645">Protease</keyword>
<keyword id="KW-0677">Repeat</keyword>
<keyword id="KW-0688">Ribosomal frameshifting</keyword>
<keyword id="KW-0468">Viral matrix protein</keyword>
<keyword id="KW-0543">Viral nucleoprotein</keyword>
<keyword id="KW-0946">Virion</keyword>
<keyword id="KW-0862">Zinc</keyword>
<keyword id="KW-0863">Zinc-finger</keyword>
<comment type="function">
    <molecule>Matrix protein p10</molecule>
    <text evidence="8">Matrix protein.</text>
</comment>
<comment type="function">
    <text evidence="8">Nucleocapsid protein p14: Nucleocapsid protein.</text>
</comment>
<comment type="function">
    <molecule>Capsid protein p27</molecule>
    <text evidence="8">Capsid protein.</text>
</comment>
<comment type="function">
    <molecule>Protease 17 kDa</molecule>
    <text evidence="2 6">The aspartyl protease mediates proteolytic cleavages of Gag and Gag-Pol polyproteins during or shortly after the release of the virion from the plasma membrane. Cleavages take place as an ordered, step-wise cascade to yield mature proteins. This process is called maturation. Displays maximal activity during the budding process just prior to particle release from the cell.</text>
</comment>
<comment type="function">
    <molecule>Protease 13 kDa</molecule>
    <text evidence="2 6">The aspartyl protease mediates proteolytic cleavages of Gag and Gag-Pol polyproteins during or shortly after the release of the virion from the plasma membrane. Cleavages take place as an ordered, step-wise cascade to yield mature proteins. This process is called maturation. Displays maximal activity during the budding process just prior to particle release from the cell.</text>
</comment>
<comment type="function">
    <molecule>G-patch peptide</molecule>
    <text evidence="2">Enhances the activity of the reverse transcriptase. May be part of the mature RT.</text>
</comment>
<comment type="catalytic activity">
    <reaction evidence="2">
        <text>dUTP + H2O = dUMP + diphosphate + H(+)</text>
        <dbReference type="Rhea" id="RHEA:10248"/>
        <dbReference type="ChEBI" id="CHEBI:15377"/>
        <dbReference type="ChEBI" id="CHEBI:15378"/>
        <dbReference type="ChEBI" id="CHEBI:33019"/>
        <dbReference type="ChEBI" id="CHEBI:61555"/>
        <dbReference type="ChEBI" id="CHEBI:246422"/>
        <dbReference type="EC" id="3.6.1.23"/>
    </reaction>
</comment>
<comment type="subunit">
    <molecule>Protease 17 kDa</molecule>
    <text evidence="2">Homodimer.</text>
</comment>
<comment type="subunit">
    <molecule>G-patch peptide</molecule>
    <text evidence="2">Interacts with the reverse transcriptase/ribonuclease H.</text>
</comment>
<comment type="subunit">
    <molecule>Nucleocapsid protein-dUTPase</molecule>
    <text evidence="2">Homotrimer.</text>
</comment>
<comment type="subcellular location">
    <molecule>Matrix protein p10</molecule>
    <subcellularLocation>
        <location evidence="8">Virion</location>
    </subcellularLocation>
</comment>
<comment type="subcellular location">
    <molecule>Capsid protein p27</molecule>
    <subcellularLocation>
        <location evidence="8">Virion</location>
    </subcellularLocation>
</comment>
<comment type="subcellular location">
    <molecule>Nucleocapsid protein-dUTPase</molecule>
    <subcellularLocation>
        <location evidence="8">Virion</location>
    </subcellularLocation>
</comment>
<comment type="subcellular location">
    <molecule>Protease 13 kDa</molecule>
    <subcellularLocation>
        <location evidence="2">Virion</location>
    </subcellularLocation>
</comment>
<comment type="subcellular location">
    <molecule>Protease 17 kDa</molecule>
    <subcellularLocation>
        <location evidence="2">Virion</location>
    </subcellularLocation>
</comment>
<comment type="alternative products">
    <event type="ribosomal frameshifting"/>
    <isoform>
        <id>P31625-1</id>
        <name>Gag-Pro polyprotein</name>
        <sequence type="displayed"/>
    </isoform>
    <isoform>
        <id>P31622-1</id>
        <name>Gag polyprotein</name>
        <sequence type="external"/>
    </isoform>
    <isoform>
        <id>P31623-1</id>
        <name>Gag-Pro-Pol polyprotein</name>
        <sequence type="external"/>
    </isoform>
</comment>
<comment type="domain">
    <text evidence="2">Gag polyprotein: Late-budding domains (L domains) are short sequence motifs essential for viral particle release. They can occur individually or in close proximity within structural proteins. They interacts with sorting cellular proteins of the multivesicular body (MVB) pathway. Most of these proteins are class E vacuolar protein sorting factors belonging to ESCRT-I, ESCRT-II or ESCRT-III complexes. Gag-p12 contains two L domains: a PTAP/PSAP motif which interacts with the UEV domain of TSG101, and a PPXY motif which binds to the WW domains of the ubiquitin ligase NEDD4. Gag-p27 contains one L domain: a PTAP/PSAP motif which interacts with the UEV domain of TSG101.</text>
</comment>
<comment type="domain">
    <molecule>Protease 17 kDa</molecule>
    <text evidence="2">The glycine-rich G-patch domain (GPD) is present at the C-terminus of the protease from which it is then detached by the protease itself.</text>
</comment>
<comment type="PTM">
    <molecule>Protease 17 kDa</molecule>
    <text evidence="2">Released by autocatalytic processing. The protease can undergo further autoprocessing to yield 2 shorter but enzymatically active forms of 12 kDa and 13 kDa without the GDP domain.</text>
</comment>
<comment type="PTM">
    <molecule>Gag-Pro polyprotein</molecule>
    <text evidence="3">Myristoylated. Myristoylation of the matrix (MA) domain mediates the transport and binding of Gag polyproteins to the host plasma membrane and is required for the assembly of viral particles.</text>
</comment>
<comment type="PTM">
    <molecule>Gag-Pro polyprotein</molecule>
    <text evidence="2">Specific enzymatic cleavages in vivo yield mature proteins.</text>
</comment>
<comment type="miscellaneous">
    <molecule>Isoform Gag-Pro polyprotein</molecule>
    <text evidence="9">Produced by -1 ribosomal frameshifting between gag-pro.</text>
</comment>
<comment type="similarity">
    <text evidence="8">In the C-terminal section; belongs to the dUTPase family.</text>
</comment>
<dbReference type="EC" id="3.6.1.23" evidence="2"/>
<dbReference type="EC" id="3.4.23.-" evidence="6"/>
<dbReference type="EMBL" id="M80216">
    <property type="protein sequence ID" value="AAA89181.1"/>
    <property type="molecule type" value="Genomic_RNA"/>
</dbReference>
<dbReference type="PIR" id="B42740">
    <property type="entry name" value="PRMVJA"/>
</dbReference>
<dbReference type="SMR" id="P31625"/>
<dbReference type="KEGG" id="vg:1490019"/>
<dbReference type="OrthoDB" id="11010at10239"/>
<dbReference type="Proteomes" id="UP000007215">
    <property type="component" value="Genome"/>
</dbReference>
<dbReference type="GO" id="GO:0019013">
    <property type="term" value="C:viral nucleocapsid"/>
    <property type="evidence" value="ECO:0007669"/>
    <property type="project" value="UniProtKB-KW"/>
</dbReference>
<dbReference type="GO" id="GO:0004190">
    <property type="term" value="F:aspartic-type endopeptidase activity"/>
    <property type="evidence" value="ECO:0007669"/>
    <property type="project" value="UniProtKB-KW"/>
</dbReference>
<dbReference type="GO" id="GO:0003677">
    <property type="term" value="F:DNA binding"/>
    <property type="evidence" value="ECO:0007669"/>
    <property type="project" value="UniProtKB-KW"/>
</dbReference>
<dbReference type="GO" id="GO:0004170">
    <property type="term" value="F:dUTP diphosphatase activity"/>
    <property type="evidence" value="ECO:0007669"/>
    <property type="project" value="UniProtKB-EC"/>
</dbReference>
<dbReference type="GO" id="GO:0039660">
    <property type="term" value="F:structural constituent of virion"/>
    <property type="evidence" value="ECO:0007669"/>
    <property type="project" value="UniProtKB-KW"/>
</dbReference>
<dbReference type="GO" id="GO:0008270">
    <property type="term" value="F:zinc ion binding"/>
    <property type="evidence" value="ECO:0007669"/>
    <property type="project" value="UniProtKB-KW"/>
</dbReference>
<dbReference type="GO" id="GO:0009117">
    <property type="term" value="P:nucleotide metabolic process"/>
    <property type="evidence" value="ECO:0007669"/>
    <property type="project" value="UniProtKB-KW"/>
</dbReference>
<dbReference type="GO" id="GO:0006508">
    <property type="term" value="P:proteolysis"/>
    <property type="evidence" value="ECO:0007669"/>
    <property type="project" value="UniProtKB-KW"/>
</dbReference>
<dbReference type="GO" id="GO:0075523">
    <property type="term" value="P:viral translational frameshifting"/>
    <property type="evidence" value="ECO:0007669"/>
    <property type="project" value="UniProtKB-KW"/>
</dbReference>
<dbReference type="CDD" id="cd05482">
    <property type="entry name" value="HIV_retropepsin_like"/>
    <property type="match status" value="1"/>
</dbReference>
<dbReference type="CDD" id="cd07557">
    <property type="entry name" value="trimeric_dUTPase"/>
    <property type="match status" value="1"/>
</dbReference>
<dbReference type="Gene3D" id="1.10.1200.30">
    <property type="match status" value="1"/>
</dbReference>
<dbReference type="Gene3D" id="2.70.40.10">
    <property type="match status" value="1"/>
</dbReference>
<dbReference type="Gene3D" id="2.40.70.10">
    <property type="entry name" value="Acid Proteases"/>
    <property type="match status" value="1"/>
</dbReference>
<dbReference type="Gene3D" id="1.10.375.10">
    <property type="entry name" value="Human Immunodeficiency Virus Type 1 Capsid Protein"/>
    <property type="match status" value="1"/>
</dbReference>
<dbReference type="Gene3D" id="1.10.150.490">
    <property type="entry name" value="Retroviral GAG p10 protein"/>
    <property type="match status" value="1"/>
</dbReference>
<dbReference type="Gene3D" id="4.10.60.10">
    <property type="entry name" value="Zinc finger, CCHC-type"/>
    <property type="match status" value="1"/>
</dbReference>
<dbReference type="InterPro" id="IPR001969">
    <property type="entry name" value="Aspartic_peptidase_AS"/>
</dbReference>
<dbReference type="InterPro" id="IPR003322">
    <property type="entry name" value="B_retro_matrix"/>
</dbReference>
<dbReference type="InterPro" id="IPR038124">
    <property type="entry name" value="B_retro_matrix_sf"/>
</dbReference>
<dbReference type="InterPro" id="IPR029054">
    <property type="entry name" value="dUTPase-like"/>
</dbReference>
<dbReference type="InterPro" id="IPR036157">
    <property type="entry name" value="dUTPase-like_sf"/>
</dbReference>
<dbReference type="InterPro" id="IPR033704">
    <property type="entry name" value="dUTPase_trimeric"/>
</dbReference>
<dbReference type="InterPro" id="IPR000467">
    <property type="entry name" value="G_patch_dom"/>
</dbReference>
<dbReference type="InterPro" id="IPR045345">
    <property type="entry name" value="Gag_p24_C"/>
</dbReference>
<dbReference type="InterPro" id="IPR001995">
    <property type="entry name" value="Peptidase_A2_cat"/>
</dbReference>
<dbReference type="InterPro" id="IPR021109">
    <property type="entry name" value="Peptidase_aspartic_dom_sf"/>
</dbReference>
<dbReference type="InterPro" id="IPR050195">
    <property type="entry name" value="Primate_lentivir_Gag_pol-like"/>
</dbReference>
<dbReference type="InterPro" id="IPR034170">
    <property type="entry name" value="Retropepsin-like_cat_dom"/>
</dbReference>
<dbReference type="InterPro" id="IPR018061">
    <property type="entry name" value="Retropepsins"/>
</dbReference>
<dbReference type="InterPro" id="IPR008916">
    <property type="entry name" value="Retrov_capsid_C"/>
</dbReference>
<dbReference type="InterPro" id="IPR008919">
    <property type="entry name" value="Retrov_capsid_N"/>
</dbReference>
<dbReference type="InterPro" id="IPR010999">
    <property type="entry name" value="Retrovr_matrix"/>
</dbReference>
<dbReference type="InterPro" id="IPR001878">
    <property type="entry name" value="Znf_CCHC"/>
</dbReference>
<dbReference type="InterPro" id="IPR036875">
    <property type="entry name" value="Znf_CCHC_sf"/>
</dbReference>
<dbReference type="PANTHER" id="PTHR40389">
    <property type="entry name" value="ENDOGENOUS RETROVIRUS GROUP K MEMBER 24 GAG POLYPROTEIN-RELATED"/>
    <property type="match status" value="1"/>
</dbReference>
<dbReference type="PANTHER" id="PTHR40389:SF3">
    <property type="entry name" value="IGE-BINDING PROTEIN"/>
    <property type="match status" value="1"/>
</dbReference>
<dbReference type="Pfam" id="PF00692">
    <property type="entry name" value="dUTPase"/>
    <property type="match status" value="1"/>
</dbReference>
<dbReference type="Pfam" id="PF01585">
    <property type="entry name" value="G-patch"/>
    <property type="match status" value="1"/>
</dbReference>
<dbReference type="Pfam" id="PF02337">
    <property type="entry name" value="Gag_p10"/>
    <property type="match status" value="1"/>
</dbReference>
<dbReference type="Pfam" id="PF00607">
    <property type="entry name" value="Gag_p24"/>
    <property type="match status" value="1"/>
</dbReference>
<dbReference type="Pfam" id="PF19317">
    <property type="entry name" value="Gag_p24_C"/>
    <property type="match status" value="1"/>
</dbReference>
<dbReference type="Pfam" id="PF00077">
    <property type="entry name" value="RVP"/>
    <property type="match status" value="1"/>
</dbReference>
<dbReference type="Pfam" id="PF00098">
    <property type="entry name" value="zf-CCHC"/>
    <property type="match status" value="1"/>
</dbReference>
<dbReference type="Pfam" id="PF14787">
    <property type="entry name" value="zf-CCHC_5"/>
    <property type="match status" value="1"/>
</dbReference>
<dbReference type="SMART" id="SM00443">
    <property type="entry name" value="G_patch"/>
    <property type="match status" value="1"/>
</dbReference>
<dbReference type="SMART" id="SM00343">
    <property type="entry name" value="ZnF_C2HC"/>
    <property type="match status" value="2"/>
</dbReference>
<dbReference type="SUPFAM" id="SSF50630">
    <property type="entry name" value="Acid proteases"/>
    <property type="match status" value="1"/>
</dbReference>
<dbReference type="SUPFAM" id="SSF51283">
    <property type="entry name" value="dUTPase-like"/>
    <property type="match status" value="1"/>
</dbReference>
<dbReference type="SUPFAM" id="SSF47836">
    <property type="entry name" value="Retroviral matrix proteins"/>
    <property type="match status" value="1"/>
</dbReference>
<dbReference type="SUPFAM" id="SSF47353">
    <property type="entry name" value="Retrovirus capsid dimerization domain-like"/>
    <property type="match status" value="1"/>
</dbReference>
<dbReference type="SUPFAM" id="SSF47943">
    <property type="entry name" value="Retrovirus capsid protein, N-terminal core domain"/>
    <property type="match status" value="1"/>
</dbReference>
<dbReference type="SUPFAM" id="SSF57756">
    <property type="entry name" value="Retrovirus zinc finger-like domains"/>
    <property type="match status" value="2"/>
</dbReference>
<dbReference type="PROSITE" id="PS50175">
    <property type="entry name" value="ASP_PROT_RETROV"/>
    <property type="match status" value="1"/>
</dbReference>
<dbReference type="PROSITE" id="PS00141">
    <property type="entry name" value="ASP_PROTEASE"/>
    <property type="match status" value="1"/>
</dbReference>
<dbReference type="PROSITE" id="PS50174">
    <property type="entry name" value="G_PATCH"/>
    <property type="match status" value="1"/>
</dbReference>
<dbReference type="PROSITE" id="PS50158">
    <property type="entry name" value="ZF_CCHC"/>
    <property type="match status" value="1"/>
</dbReference>
<proteinExistence type="inferred from homology"/>
<feature type="initiator methionine" description="Removed; by host" evidence="1">
    <location>
        <position position="1"/>
    </location>
</feature>
<feature type="chain" id="PRO_0000199548" description="Gag-Pro polyprotein">
    <location>
        <begin position="2"/>
        <end position="866"/>
    </location>
</feature>
<feature type="chain" id="PRO_0000443182" description="Matrix protein p10">
    <location>
        <begin position="2"/>
        <end position="99"/>
    </location>
</feature>
<feature type="chain" id="PRO_0000443183" description="Phosphorylated protein">
    <location>
        <begin position="100"/>
        <end position="167"/>
    </location>
</feature>
<feature type="chain" id="PRO_0000443184" description="p12">
    <location>
        <begin position="168"/>
        <end position="256"/>
    </location>
</feature>
<feature type="chain" id="PRO_0000443185" description="Capsid protein p27">
    <location>
        <begin position="257"/>
        <end position="477"/>
    </location>
</feature>
<feature type="chain" id="PRO_0000443186" description="Nucleocapsid protein-dUTPase">
    <location>
        <begin position="478"/>
        <end position="713"/>
    </location>
</feature>
<feature type="chain" id="PRO_0000443187" description="Protease 17 kDa">
    <location>
        <begin position="714"/>
        <end position="866"/>
    </location>
</feature>
<feature type="chain" id="PRO_0000443188" description="Protease 13 kDa">
    <location>
        <begin position="714"/>
        <end position="831"/>
    </location>
</feature>
<feature type="peptide" id="PRO_0000443189" description="G-patch peptide">
    <location>
        <begin position="832"/>
        <end position="866"/>
    </location>
</feature>
<feature type="domain" description="Peptidase A2" evidence="6">
    <location>
        <begin position="734"/>
        <end position="810"/>
    </location>
</feature>
<feature type="domain" description="G-patch" evidence="5">
    <location>
        <begin position="821"/>
        <end position="866"/>
    </location>
</feature>
<feature type="zinc finger region" description="CCHC-type" evidence="4">
    <location>
        <begin position="507"/>
        <end position="524"/>
    </location>
</feature>
<feature type="region of interest" description="Disordered" evidence="7">
    <location>
        <begin position="103"/>
        <end position="148"/>
    </location>
</feature>
<feature type="region of interest" description="Disordered" evidence="7">
    <location>
        <begin position="550"/>
        <end position="570"/>
    </location>
</feature>
<feature type="short sequence motif" description="PTAP/PSAP motif" evidence="8">
    <location>
        <begin position="202"/>
        <end position="205"/>
    </location>
</feature>
<feature type="short sequence motif" description="PPXY motif" evidence="8">
    <location>
        <begin position="208"/>
        <end position="211"/>
    </location>
</feature>
<feature type="short sequence motif" description="PTAP/PSAP motif" evidence="3">
    <location>
        <begin position="287"/>
        <end position="290"/>
    </location>
</feature>
<feature type="compositionally biased region" description="Pro residues" evidence="7">
    <location>
        <begin position="119"/>
        <end position="128"/>
    </location>
</feature>
<feature type="active site" description="Protease; shared with dimeric partner" evidence="6">
    <location>
        <position position="739"/>
    </location>
</feature>
<feature type="site" description="Cleavage; by viral protease" evidence="1">
    <location>
        <begin position="99"/>
        <end position="100"/>
    </location>
</feature>
<feature type="site" description="Cleavage; by viral protease" evidence="1">
    <location>
        <begin position="256"/>
        <end position="257"/>
    </location>
</feature>
<feature type="site" description="Cleavage; by viral protease" evidence="1">
    <location>
        <begin position="477"/>
        <end position="478"/>
    </location>
</feature>
<feature type="site" description="Cleavage; by viral protease" evidence="2">
    <location>
        <begin position="713"/>
        <end position="714"/>
    </location>
</feature>
<feature type="site" description="Cleavage; by viral protease" evidence="2">
    <location>
        <begin position="831"/>
        <end position="832"/>
    </location>
</feature>
<organism>
    <name type="scientific">Sheep pulmonary adenomatosis virus</name>
    <name type="common">Jaagsiekte sheep retrovirus</name>
    <name type="synonym">JSRV</name>
    <dbReference type="NCBI Taxonomy" id="11746"/>
    <lineage>
        <taxon>Viruses</taxon>
        <taxon>Riboviria</taxon>
        <taxon>Pararnavirae</taxon>
        <taxon>Artverviricota</taxon>
        <taxon>Revtraviricetes</taxon>
        <taxon>Ortervirales</taxon>
        <taxon>Retroviridae</taxon>
        <taxon>Orthoretrovirinae</taxon>
        <taxon>Betaretrovirus</taxon>
    </lineage>
</organism>
<gene>
    <name type="primary">pro</name>
</gene>
<accession>P31625</accession>
<evidence type="ECO:0000250" key="1">
    <source>
        <dbReference type="UniProtKB" id="P07567"/>
    </source>
</evidence>
<evidence type="ECO:0000250" key="2">
    <source>
        <dbReference type="UniProtKB" id="P07570"/>
    </source>
</evidence>
<evidence type="ECO:0000250" key="3">
    <source>
        <dbReference type="UniProtKB" id="P10258"/>
    </source>
</evidence>
<evidence type="ECO:0000255" key="4">
    <source>
        <dbReference type="PROSITE-ProRule" id="PRU00047"/>
    </source>
</evidence>
<evidence type="ECO:0000255" key="5">
    <source>
        <dbReference type="PROSITE-ProRule" id="PRU00092"/>
    </source>
</evidence>
<evidence type="ECO:0000255" key="6">
    <source>
        <dbReference type="PROSITE-ProRule" id="PRU00275"/>
    </source>
</evidence>
<evidence type="ECO:0000256" key="7">
    <source>
        <dbReference type="SAM" id="MobiDB-lite"/>
    </source>
</evidence>
<evidence type="ECO:0000305" key="8"/>
<evidence type="ECO:0000305" key="9">
    <source>
    </source>
</evidence>
<name>PRO_JSRV</name>
<reference key="1">
    <citation type="journal article" date="1992" name="J. Virol.">
        <title>Nucleotide sequence of the jaagsiekte retrovirus, an exogenous and endogenous type D and B retrovirus of sheep and goats.</title>
        <authorList>
            <person name="York D.F."/>
            <person name="Vigne R."/>
            <person name="Verwoerd D.W."/>
            <person name="Querat G."/>
        </authorList>
    </citation>
    <scope>NUCLEOTIDE SEQUENCE [GENOMIC RNA]</scope>
    <source>
        <strain>JSRV-SA</strain>
    </source>
</reference>
<reference key="2">
    <citation type="journal article" date="2013" name="Biomed. Res. Int.">
        <title>A genome-wide analysis of RNA pseudoknots that stimulate efficient -1 ribosomal frameshifting or readthrough in animal viruses.</title>
        <authorList>
            <person name="Huang X."/>
            <person name="Cheng Q."/>
            <person name="Du Z."/>
        </authorList>
    </citation>
    <scope>RIBOSOMAL FRAMESHIFT</scope>
</reference>
<organismHost>
    <name type="scientific">Ovis aries</name>
    <name type="common">Sheep</name>
    <dbReference type="NCBI Taxonomy" id="9940"/>
</organismHost>
<protein>
    <recommendedName>
        <fullName>Gag-Pro polyprotein</fullName>
    </recommendedName>
    <component>
        <recommendedName>
            <fullName>Matrix protein p10</fullName>
        </recommendedName>
    </component>
    <component>
        <recommendedName>
            <fullName>Phosphorylated protein</fullName>
        </recommendedName>
    </component>
    <component>
        <recommendedName>
            <fullName>p12</fullName>
        </recommendedName>
    </component>
    <component>
        <recommendedName>
            <fullName>Capsid protein p27</fullName>
        </recommendedName>
    </component>
    <component>
        <recommendedName>
            <fullName>Nucleocapsid protein-dUTPase</fullName>
            <shortName>NC-dUTPase</shortName>
            <ecNumber evidence="2">3.6.1.23</ecNumber>
        </recommendedName>
    </component>
    <component>
        <recommendedName>
            <fullName evidence="2">Protease 17 kDa</fullName>
            <ecNumber evidence="6">3.4.23.-</ecNumber>
        </recommendedName>
    </component>
    <component>
        <recommendedName>
            <fullName evidence="2">Protease 13 kDa</fullName>
            <ecNumber evidence="6">3.4.23.-</ecNumber>
        </recommendedName>
    </component>
    <component>
        <recommendedName>
            <fullName evidence="2">G-patch peptide</fullName>
        </recommendedName>
    </component>
</protein>